<comment type="function">
    <text evidence="1">Snake venom serine protease that may act in the hemostasis system of the prey.</text>
</comment>
<comment type="subunit">
    <text evidence="1">Monomer.</text>
</comment>
<comment type="subcellular location">
    <subcellularLocation>
        <location>Secreted</location>
    </subcellularLocation>
</comment>
<comment type="tissue specificity">
    <text>Expressed by the venom gland.</text>
</comment>
<comment type="similarity">
    <text evidence="3">Belongs to the peptidase S1 family. Snake venom subfamily.</text>
</comment>
<sequence>MVLIRVLANLLILQLSYAQKSSELVIGGDECNINEHRFLVALYDYWSQSFLCGGTLINEEWVLTAKHCDRTHILIYVGVHDRSVQFDKEQRRFPKEKYFFDCSNNFTKWDKDIMLIRLNKPVSYSEHIAPLSLPSSPPIVGSVCRAMGWGQTTSPQETLPDVPHCANINLLDYEVCRTAHPQFRLPATSRTLCAGVLEGGIDTCNRDSGGPLICNGQFQGIVFWGPDPCAQPDKPGLYTKVFDHLDWIQSIIAGEKTVNCPP</sequence>
<name>VSP1_CROAD</name>
<evidence type="ECO:0000250" key="1"/>
<evidence type="ECO:0000255" key="2"/>
<evidence type="ECO:0000255" key="3">
    <source>
        <dbReference type="PROSITE-ProRule" id="PRU00274"/>
    </source>
</evidence>
<organism>
    <name type="scientific">Crotalus adamanteus</name>
    <name type="common">Eastern diamondback rattlesnake</name>
    <dbReference type="NCBI Taxonomy" id="8729"/>
    <lineage>
        <taxon>Eukaryota</taxon>
        <taxon>Metazoa</taxon>
        <taxon>Chordata</taxon>
        <taxon>Craniata</taxon>
        <taxon>Vertebrata</taxon>
        <taxon>Euteleostomi</taxon>
        <taxon>Lepidosauria</taxon>
        <taxon>Squamata</taxon>
        <taxon>Bifurcata</taxon>
        <taxon>Unidentata</taxon>
        <taxon>Episquamata</taxon>
        <taxon>Toxicofera</taxon>
        <taxon>Serpentes</taxon>
        <taxon>Colubroidea</taxon>
        <taxon>Viperidae</taxon>
        <taxon>Crotalinae</taxon>
        <taxon>Crotalus</taxon>
    </lineage>
</organism>
<protein>
    <recommendedName>
        <fullName>Snake venom serine proteinase 1</fullName>
        <shortName>SVSP</shortName>
        <ecNumber>3.4.21.-</ecNumber>
    </recommendedName>
</protein>
<keyword id="KW-1015">Disulfide bond</keyword>
<keyword id="KW-0325">Glycoprotein</keyword>
<keyword id="KW-1199">Hemostasis impairing toxin</keyword>
<keyword id="KW-0378">Hydrolase</keyword>
<keyword id="KW-0645">Protease</keyword>
<keyword id="KW-0964">Secreted</keyword>
<keyword id="KW-0720">Serine protease</keyword>
<keyword id="KW-0732">Signal</keyword>
<keyword id="KW-0800">Toxin</keyword>
<keyword id="KW-0865">Zymogen</keyword>
<dbReference type="EC" id="3.4.21.-"/>
<dbReference type="EMBL" id="JU173726">
    <property type="protein sequence ID" value="AFJ49252.1"/>
    <property type="molecule type" value="mRNA"/>
</dbReference>
<dbReference type="SMR" id="J3S3W5"/>
<dbReference type="GO" id="GO:0005576">
    <property type="term" value="C:extracellular region"/>
    <property type="evidence" value="ECO:0007669"/>
    <property type="project" value="UniProtKB-SubCell"/>
</dbReference>
<dbReference type="GO" id="GO:0030141">
    <property type="term" value="C:secretory granule"/>
    <property type="evidence" value="ECO:0007669"/>
    <property type="project" value="TreeGrafter"/>
</dbReference>
<dbReference type="GO" id="GO:0004252">
    <property type="term" value="F:serine-type endopeptidase activity"/>
    <property type="evidence" value="ECO:0007669"/>
    <property type="project" value="InterPro"/>
</dbReference>
<dbReference type="GO" id="GO:0090729">
    <property type="term" value="F:toxin activity"/>
    <property type="evidence" value="ECO:0007669"/>
    <property type="project" value="UniProtKB-KW"/>
</dbReference>
<dbReference type="GO" id="GO:0006508">
    <property type="term" value="P:proteolysis"/>
    <property type="evidence" value="ECO:0007669"/>
    <property type="project" value="UniProtKB-KW"/>
</dbReference>
<dbReference type="CDD" id="cd00190">
    <property type="entry name" value="Tryp_SPc"/>
    <property type="match status" value="1"/>
</dbReference>
<dbReference type="FunFam" id="2.40.10.10:FF:000158">
    <property type="entry name" value="Thrombin-like enzyme saxthrombin"/>
    <property type="match status" value="1"/>
</dbReference>
<dbReference type="Gene3D" id="2.40.10.10">
    <property type="entry name" value="Trypsin-like serine proteases"/>
    <property type="match status" value="2"/>
</dbReference>
<dbReference type="InterPro" id="IPR009003">
    <property type="entry name" value="Peptidase_S1_PA"/>
</dbReference>
<dbReference type="InterPro" id="IPR043504">
    <property type="entry name" value="Peptidase_S1_PA_chymotrypsin"/>
</dbReference>
<dbReference type="InterPro" id="IPR001314">
    <property type="entry name" value="Peptidase_S1A"/>
</dbReference>
<dbReference type="InterPro" id="IPR001254">
    <property type="entry name" value="Trypsin_dom"/>
</dbReference>
<dbReference type="PANTHER" id="PTHR24271:SF47">
    <property type="entry name" value="KALLIKREIN-1"/>
    <property type="match status" value="1"/>
</dbReference>
<dbReference type="PANTHER" id="PTHR24271">
    <property type="entry name" value="KALLIKREIN-RELATED"/>
    <property type="match status" value="1"/>
</dbReference>
<dbReference type="Pfam" id="PF00089">
    <property type="entry name" value="Trypsin"/>
    <property type="match status" value="1"/>
</dbReference>
<dbReference type="PRINTS" id="PR00722">
    <property type="entry name" value="CHYMOTRYPSIN"/>
</dbReference>
<dbReference type="SMART" id="SM00020">
    <property type="entry name" value="Tryp_SPc"/>
    <property type="match status" value="1"/>
</dbReference>
<dbReference type="SUPFAM" id="SSF50494">
    <property type="entry name" value="Trypsin-like serine proteases"/>
    <property type="match status" value="1"/>
</dbReference>
<dbReference type="PROSITE" id="PS50240">
    <property type="entry name" value="TRYPSIN_DOM"/>
    <property type="match status" value="1"/>
</dbReference>
<proteinExistence type="evidence at protein level"/>
<reference key="1">
    <citation type="journal article" date="2012" name="BMC Genomics">
        <title>The venom-gland transcriptome of the eastern diamondback rattlesnake (Crotalus adamanteus).</title>
        <authorList>
            <person name="Rokyta D.R."/>
            <person name="Lemmon A.R."/>
            <person name="Margres M.J."/>
            <person name="Aronow K."/>
        </authorList>
    </citation>
    <scope>NUCLEOTIDE SEQUENCE [MRNA]</scope>
    <source>
        <tissue>Venom gland</tissue>
    </source>
</reference>
<reference key="2">
    <citation type="journal article" date="2014" name="J. Proteomics">
        <title>Linking the transcriptome and proteome to characterize the venom of the eastern diamondback rattlesnake (Crotalus adamanteus).</title>
        <authorList>
            <person name="Margres M.J."/>
            <person name="McGivern J.J."/>
            <person name="Wray K.P."/>
            <person name="Seavy M."/>
            <person name="Calvin K."/>
            <person name="Rokyta D.R."/>
        </authorList>
    </citation>
    <scope>IDENTIFICATION BY MASS SPECTROMETRY</scope>
    <source>
        <tissue>Venom</tissue>
    </source>
</reference>
<feature type="signal peptide" evidence="2">
    <location>
        <begin position="1"/>
        <end position="18"/>
    </location>
</feature>
<feature type="propeptide" id="PRO_0000425632" evidence="1">
    <location>
        <begin position="19"/>
        <end position="24"/>
    </location>
</feature>
<feature type="chain" id="PRO_0000425633" description="Snake venom serine proteinase 1">
    <location>
        <begin position="25"/>
        <end position="262"/>
    </location>
</feature>
<feature type="domain" description="Peptidase S1" evidence="3">
    <location>
        <begin position="25"/>
        <end position="253"/>
    </location>
</feature>
<feature type="active site" description="Charge relay system" evidence="3">
    <location>
        <position position="67"/>
    </location>
</feature>
<feature type="active site" description="Charge relay system" evidence="3">
    <location>
        <position position="112"/>
    </location>
</feature>
<feature type="active site" description="Charge relay system" evidence="3">
    <location>
        <position position="208"/>
    </location>
</feature>
<feature type="glycosylation site" description="N-linked (GlcNAc...) asparagine" evidence="2">
    <location>
        <position position="105"/>
    </location>
</feature>
<feature type="disulfide bond" evidence="3">
    <location>
        <begin position="31"/>
        <end position="165"/>
    </location>
</feature>
<feature type="disulfide bond" evidence="3">
    <location>
        <begin position="52"/>
        <end position="68"/>
    </location>
</feature>
<feature type="disulfide bond" evidence="3">
    <location>
        <begin position="144"/>
        <end position="214"/>
    </location>
</feature>
<feature type="disulfide bond" evidence="3">
    <location>
        <begin position="176"/>
        <end position="193"/>
    </location>
</feature>
<feature type="disulfide bond" evidence="3">
    <location>
        <begin position="204"/>
        <end position="229"/>
    </location>
</feature>
<accession>J3S3W5</accession>